<feature type="chain" id="PRO_0000297722" description="Histone H2A.Z">
    <location>
        <begin position="1"/>
        <end position="138"/>
    </location>
</feature>
<feature type="region of interest" description="Disordered" evidence="2">
    <location>
        <begin position="1"/>
        <end position="32"/>
    </location>
</feature>
<feature type="compositionally biased region" description="Gly residues" evidence="2">
    <location>
        <begin position="1"/>
        <end position="13"/>
    </location>
</feature>
<feature type="modified residue" description="N6-acetyllysine" evidence="1">
    <location>
        <position position="5"/>
    </location>
</feature>
<feature type="modified residue" description="N6-acetyllysine" evidence="1">
    <location>
        <position position="12"/>
    </location>
</feature>
<comment type="function">
    <text evidence="1">Variant histone H2A which can replace H2A in some nucleosomes. Nucleosomes wrap and compact DNA into chromatin, limiting DNA accessibility to the cellular machineries which require DNA as a template. Histones thereby play a central role in transcription regulation, DNA repair, DNA replication and chromosomal stability. DNA accessibility is regulated via a complex set of post-translational modifications of histones, also called histone code, and nucleosome remodeling. This variant is enriched at promoters, it may keep them in a repressed state until the appropriate activation signal is received. Near telomeres, it may counteract gene silencing caused by the spread of heterochromatin proteins. Required for the RNA polymerase II and SPT15/TBP recruitment to the target genes. Involved in chromosome stability (By similarity).</text>
</comment>
<comment type="subunit">
    <text evidence="1">The nucleosome is a histone octamer containing two molecules each of H2A, H2B, H3 and H4 assembled in one H3-H4 heterotetramer and two H2A-H2B heterodimers. The octamer wraps approximately 147 bp of DNA. H2A or its variant H2A.Z forms a heterodimer with H2B. H2A.Z associates with the VPS72/SWC2 subunit of the SWR1 chromatin remodeling complex. Also interacts with RBP1/DNA-directed RNA polymerase II largest subunit (By similarity).</text>
</comment>
<comment type="subcellular location">
    <subcellularLocation>
        <location evidence="1">Nucleus</location>
    </subcellularLocation>
    <subcellularLocation>
        <location evidence="1">Chromosome</location>
    </subcellularLocation>
</comment>
<comment type="PTM">
    <text evidence="1">Acetylated once deposited into chromatin.</text>
</comment>
<comment type="similarity">
    <text evidence="3">Belongs to the histone H2A family.</text>
</comment>
<dbReference type="EMBL" id="GG704912">
    <property type="protein sequence ID" value="EAS30922.3"/>
    <property type="molecule type" value="Genomic_DNA"/>
</dbReference>
<dbReference type="RefSeq" id="XP_001242505.1">
    <property type="nucleotide sequence ID" value="XM_001242504.2"/>
</dbReference>
<dbReference type="SMR" id="Q1DTG2"/>
<dbReference type="FunCoup" id="Q1DTG2">
    <property type="interactions" value="996"/>
</dbReference>
<dbReference type="STRING" id="246410.Q1DTG2"/>
<dbReference type="GeneID" id="4560872"/>
<dbReference type="KEGG" id="cim:CIMG_06401"/>
<dbReference type="VEuPathDB" id="FungiDB:CIMG_06401"/>
<dbReference type="InParanoid" id="Q1DTG2"/>
<dbReference type="OMA" id="MNKKGAP"/>
<dbReference type="OrthoDB" id="9421954at2759"/>
<dbReference type="Proteomes" id="UP000001261">
    <property type="component" value="Unassembled WGS sequence"/>
</dbReference>
<dbReference type="GO" id="GO:0000786">
    <property type="term" value="C:nucleosome"/>
    <property type="evidence" value="ECO:0007669"/>
    <property type="project" value="UniProtKB-KW"/>
</dbReference>
<dbReference type="GO" id="GO:0005634">
    <property type="term" value="C:nucleus"/>
    <property type="evidence" value="ECO:0007669"/>
    <property type="project" value="UniProtKB-SubCell"/>
</dbReference>
<dbReference type="GO" id="GO:0003677">
    <property type="term" value="F:DNA binding"/>
    <property type="evidence" value="ECO:0007669"/>
    <property type="project" value="UniProtKB-KW"/>
</dbReference>
<dbReference type="GO" id="GO:0046982">
    <property type="term" value="F:protein heterodimerization activity"/>
    <property type="evidence" value="ECO:0007669"/>
    <property type="project" value="InterPro"/>
</dbReference>
<dbReference type="GO" id="GO:0030527">
    <property type="term" value="F:structural constituent of chromatin"/>
    <property type="evidence" value="ECO:0007669"/>
    <property type="project" value="InterPro"/>
</dbReference>
<dbReference type="CDD" id="cd00074">
    <property type="entry name" value="HFD_H2A"/>
    <property type="match status" value="1"/>
</dbReference>
<dbReference type="FunFam" id="1.10.20.10:FF:000021">
    <property type="entry name" value="Histone H2A"/>
    <property type="match status" value="1"/>
</dbReference>
<dbReference type="Gene3D" id="1.10.20.10">
    <property type="entry name" value="Histone, subunit A"/>
    <property type="match status" value="1"/>
</dbReference>
<dbReference type="InterPro" id="IPR009072">
    <property type="entry name" value="Histone-fold"/>
</dbReference>
<dbReference type="InterPro" id="IPR002119">
    <property type="entry name" value="Histone_H2A"/>
</dbReference>
<dbReference type="InterPro" id="IPR007125">
    <property type="entry name" value="Histone_H2A/H2B/H3"/>
</dbReference>
<dbReference type="InterPro" id="IPR032454">
    <property type="entry name" value="Histone_H2A_C"/>
</dbReference>
<dbReference type="PANTHER" id="PTHR23430">
    <property type="entry name" value="HISTONE H2A"/>
    <property type="match status" value="1"/>
</dbReference>
<dbReference type="Pfam" id="PF00125">
    <property type="entry name" value="Histone"/>
    <property type="match status" value="1"/>
</dbReference>
<dbReference type="Pfam" id="PF16211">
    <property type="entry name" value="Histone_H2A_C"/>
    <property type="match status" value="1"/>
</dbReference>
<dbReference type="PRINTS" id="PR00620">
    <property type="entry name" value="HISTONEH2A"/>
</dbReference>
<dbReference type="SMART" id="SM00414">
    <property type="entry name" value="H2A"/>
    <property type="match status" value="1"/>
</dbReference>
<dbReference type="SUPFAM" id="SSF47113">
    <property type="entry name" value="Histone-fold"/>
    <property type="match status" value="1"/>
</dbReference>
<evidence type="ECO:0000250" key="1"/>
<evidence type="ECO:0000256" key="2">
    <source>
        <dbReference type="SAM" id="MobiDB-lite"/>
    </source>
</evidence>
<evidence type="ECO:0000305" key="3"/>
<proteinExistence type="inferred from homology"/>
<accession>Q1DTG2</accession>
<accession>J3K8M8</accession>
<organism>
    <name type="scientific">Coccidioides immitis (strain RS)</name>
    <name type="common">Valley fever fungus</name>
    <dbReference type="NCBI Taxonomy" id="246410"/>
    <lineage>
        <taxon>Eukaryota</taxon>
        <taxon>Fungi</taxon>
        <taxon>Dikarya</taxon>
        <taxon>Ascomycota</taxon>
        <taxon>Pezizomycotina</taxon>
        <taxon>Eurotiomycetes</taxon>
        <taxon>Eurotiomycetidae</taxon>
        <taxon>Onygenales</taxon>
        <taxon>Onygenaceae</taxon>
        <taxon>Coccidioides</taxon>
    </lineage>
</organism>
<gene>
    <name type="primary">HTZ1</name>
    <name type="ORF">CIMG_06401</name>
</gene>
<reference key="1">
    <citation type="journal article" date="2009" name="Genome Res.">
        <title>Comparative genomic analyses of the human fungal pathogens Coccidioides and their relatives.</title>
        <authorList>
            <person name="Sharpton T.J."/>
            <person name="Stajich J.E."/>
            <person name="Rounsley S.D."/>
            <person name="Gardner M.J."/>
            <person name="Wortman J.R."/>
            <person name="Jordar V.S."/>
            <person name="Maiti R."/>
            <person name="Kodira C.D."/>
            <person name="Neafsey D.E."/>
            <person name="Zeng Q."/>
            <person name="Hung C.-Y."/>
            <person name="McMahan C."/>
            <person name="Muszewska A."/>
            <person name="Grynberg M."/>
            <person name="Mandel M.A."/>
            <person name="Kellner E.M."/>
            <person name="Barker B.M."/>
            <person name="Galgiani J.N."/>
            <person name="Orbach M.J."/>
            <person name="Kirkland T.N."/>
            <person name="Cole G.T."/>
            <person name="Henn M.R."/>
            <person name="Birren B.W."/>
            <person name="Taylor J.W."/>
        </authorList>
    </citation>
    <scope>NUCLEOTIDE SEQUENCE [LARGE SCALE GENOMIC DNA]</scope>
    <source>
        <strain>RS</strain>
    </source>
</reference>
<reference key="2">
    <citation type="journal article" date="2010" name="Genome Res.">
        <title>Population genomic sequencing of Coccidioides fungi reveals recent hybridization and transposon control.</title>
        <authorList>
            <person name="Neafsey D.E."/>
            <person name="Barker B.M."/>
            <person name="Sharpton T.J."/>
            <person name="Stajich J.E."/>
            <person name="Park D.J."/>
            <person name="Whiston E."/>
            <person name="Hung C.-Y."/>
            <person name="McMahan C."/>
            <person name="White J."/>
            <person name="Sykes S."/>
            <person name="Heiman D."/>
            <person name="Young S."/>
            <person name="Zeng Q."/>
            <person name="Abouelleil A."/>
            <person name="Aftuck L."/>
            <person name="Bessette D."/>
            <person name="Brown A."/>
            <person name="FitzGerald M."/>
            <person name="Lui A."/>
            <person name="Macdonald J.P."/>
            <person name="Priest M."/>
            <person name="Orbach M.J."/>
            <person name="Galgiani J.N."/>
            <person name="Kirkland T.N."/>
            <person name="Cole G.T."/>
            <person name="Birren B.W."/>
            <person name="Henn M.R."/>
            <person name="Taylor J.W."/>
            <person name="Rounsley S.D."/>
        </authorList>
    </citation>
    <scope>GENOME REANNOTATION</scope>
    <source>
        <strain>RS</strain>
    </source>
</reference>
<keyword id="KW-0007">Acetylation</keyword>
<keyword id="KW-0158">Chromosome</keyword>
<keyword id="KW-0238">DNA-binding</keyword>
<keyword id="KW-0544">Nucleosome core</keyword>
<keyword id="KW-0539">Nucleus</keyword>
<keyword id="KW-1185">Reference proteome</keyword>
<protein>
    <recommendedName>
        <fullName>Histone H2A.Z</fullName>
    </recommendedName>
</protein>
<sequence>MPGGKGKSVGGKGAPKDASGKTQRSHSAKAGLQFPCGRIKRFLKNNTQNKMRVGAKAAVYVTAVLEYLTAEVLELAGNAAKDLKVKRITPRHLQLAIRGDEELDTLIRATIAFGGVLPRINRALLLKVEQKKKSKIEA</sequence>
<name>H2AZ_COCIM</name>